<keyword id="KW-0143">Chaperone</keyword>
<keyword id="KW-0963">Cytoplasm</keyword>
<comment type="function">
    <text evidence="1">Together with the chaperonin GroEL, plays an essential role in assisting protein folding. The GroEL-GroES system forms a nano-cage that allows encapsulation of the non-native substrate proteins and provides a physical environment optimized to promote and accelerate protein folding. GroES binds to the apical surface of the GroEL ring, thereby capping the opening of the GroEL channel.</text>
</comment>
<comment type="subunit">
    <text evidence="1">Heptamer of 7 subunits arranged in a ring. Interacts with the chaperonin GroEL.</text>
</comment>
<comment type="subcellular location">
    <subcellularLocation>
        <location evidence="1">Cytoplasm</location>
    </subcellularLocation>
</comment>
<comment type="similarity">
    <text evidence="1">Belongs to the GroES chaperonin family.</text>
</comment>
<proteinExistence type="inferred from homology"/>
<evidence type="ECO:0000255" key="1">
    <source>
        <dbReference type="HAMAP-Rule" id="MF_00580"/>
    </source>
</evidence>
<organism>
    <name type="scientific">Staphylococcus aureus (strain USA300)</name>
    <dbReference type="NCBI Taxonomy" id="367830"/>
    <lineage>
        <taxon>Bacteria</taxon>
        <taxon>Bacillati</taxon>
        <taxon>Bacillota</taxon>
        <taxon>Bacilli</taxon>
        <taxon>Bacillales</taxon>
        <taxon>Staphylococcaceae</taxon>
        <taxon>Staphylococcus</taxon>
    </lineage>
</organism>
<feature type="chain" id="PRO_1000025376" description="Co-chaperonin GroES">
    <location>
        <begin position="1"/>
        <end position="94"/>
    </location>
</feature>
<gene>
    <name evidence="1" type="primary">groES</name>
    <name evidence="1" type="synonym">groS</name>
    <name type="ordered locus">SAUSA300_1983</name>
</gene>
<name>CH10_STAA3</name>
<reference key="1">
    <citation type="journal article" date="2006" name="Lancet">
        <title>Complete genome sequence of USA300, an epidemic clone of community-acquired meticillin-resistant Staphylococcus aureus.</title>
        <authorList>
            <person name="Diep B.A."/>
            <person name="Gill S.R."/>
            <person name="Chang R.F."/>
            <person name="Phan T.H."/>
            <person name="Chen J.H."/>
            <person name="Davidson M.G."/>
            <person name="Lin F."/>
            <person name="Lin J."/>
            <person name="Carleton H.A."/>
            <person name="Mongodin E.F."/>
            <person name="Sensabaugh G.F."/>
            <person name="Perdreau-Remington F."/>
        </authorList>
    </citation>
    <scope>NUCLEOTIDE SEQUENCE [LARGE SCALE GENOMIC DNA]</scope>
    <source>
        <strain>USA300</strain>
    </source>
</reference>
<dbReference type="EMBL" id="CP000255">
    <property type="protein sequence ID" value="ABD21422.1"/>
    <property type="molecule type" value="Genomic_DNA"/>
</dbReference>
<dbReference type="RefSeq" id="WP_000917289.1">
    <property type="nucleotide sequence ID" value="NZ_CP027476.1"/>
</dbReference>
<dbReference type="SMR" id="Q2FF94"/>
<dbReference type="GeneID" id="98346332"/>
<dbReference type="KEGG" id="saa:SAUSA300_1983"/>
<dbReference type="HOGENOM" id="CLU_132825_2_1_9"/>
<dbReference type="OMA" id="EDFLIMR"/>
<dbReference type="Proteomes" id="UP000001939">
    <property type="component" value="Chromosome"/>
</dbReference>
<dbReference type="GO" id="GO:0005737">
    <property type="term" value="C:cytoplasm"/>
    <property type="evidence" value="ECO:0007669"/>
    <property type="project" value="UniProtKB-SubCell"/>
</dbReference>
<dbReference type="GO" id="GO:0005524">
    <property type="term" value="F:ATP binding"/>
    <property type="evidence" value="ECO:0007669"/>
    <property type="project" value="InterPro"/>
</dbReference>
<dbReference type="GO" id="GO:0046872">
    <property type="term" value="F:metal ion binding"/>
    <property type="evidence" value="ECO:0007669"/>
    <property type="project" value="TreeGrafter"/>
</dbReference>
<dbReference type="GO" id="GO:0044183">
    <property type="term" value="F:protein folding chaperone"/>
    <property type="evidence" value="ECO:0007669"/>
    <property type="project" value="InterPro"/>
</dbReference>
<dbReference type="GO" id="GO:0051087">
    <property type="term" value="F:protein-folding chaperone binding"/>
    <property type="evidence" value="ECO:0007669"/>
    <property type="project" value="TreeGrafter"/>
</dbReference>
<dbReference type="GO" id="GO:0051082">
    <property type="term" value="F:unfolded protein binding"/>
    <property type="evidence" value="ECO:0007669"/>
    <property type="project" value="TreeGrafter"/>
</dbReference>
<dbReference type="GO" id="GO:0051085">
    <property type="term" value="P:chaperone cofactor-dependent protein refolding"/>
    <property type="evidence" value="ECO:0007669"/>
    <property type="project" value="TreeGrafter"/>
</dbReference>
<dbReference type="CDD" id="cd00320">
    <property type="entry name" value="cpn10"/>
    <property type="match status" value="1"/>
</dbReference>
<dbReference type="FunFam" id="2.30.33.40:FF:000001">
    <property type="entry name" value="10 kDa chaperonin"/>
    <property type="match status" value="1"/>
</dbReference>
<dbReference type="Gene3D" id="2.30.33.40">
    <property type="entry name" value="GroES chaperonin"/>
    <property type="match status" value="1"/>
</dbReference>
<dbReference type="HAMAP" id="MF_00580">
    <property type="entry name" value="CH10"/>
    <property type="match status" value="1"/>
</dbReference>
<dbReference type="InterPro" id="IPR020818">
    <property type="entry name" value="Chaperonin_GroES"/>
</dbReference>
<dbReference type="InterPro" id="IPR037124">
    <property type="entry name" value="Chaperonin_GroES_sf"/>
</dbReference>
<dbReference type="InterPro" id="IPR018369">
    <property type="entry name" value="Chaprnonin_Cpn10_CS"/>
</dbReference>
<dbReference type="InterPro" id="IPR011032">
    <property type="entry name" value="GroES-like_sf"/>
</dbReference>
<dbReference type="NCBIfam" id="NF001531">
    <property type="entry name" value="PRK00364.2-2"/>
    <property type="match status" value="1"/>
</dbReference>
<dbReference type="NCBIfam" id="NF001532">
    <property type="entry name" value="PRK00364.2-3"/>
    <property type="match status" value="1"/>
</dbReference>
<dbReference type="NCBIfam" id="NF001533">
    <property type="entry name" value="PRK00364.2-4"/>
    <property type="match status" value="1"/>
</dbReference>
<dbReference type="NCBIfam" id="NF001534">
    <property type="entry name" value="PRK00364.2-5"/>
    <property type="match status" value="1"/>
</dbReference>
<dbReference type="PANTHER" id="PTHR10772">
    <property type="entry name" value="10 KDA HEAT SHOCK PROTEIN"/>
    <property type="match status" value="1"/>
</dbReference>
<dbReference type="PANTHER" id="PTHR10772:SF58">
    <property type="entry name" value="CO-CHAPERONIN GROES"/>
    <property type="match status" value="1"/>
</dbReference>
<dbReference type="Pfam" id="PF00166">
    <property type="entry name" value="Cpn10"/>
    <property type="match status" value="1"/>
</dbReference>
<dbReference type="PRINTS" id="PR00297">
    <property type="entry name" value="CHAPERONIN10"/>
</dbReference>
<dbReference type="SMART" id="SM00883">
    <property type="entry name" value="Cpn10"/>
    <property type="match status" value="1"/>
</dbReference>
<dbReference type="SUPFAM" id="SSF50129">
    <property type="entry name" value="GroES-like"/>
    <property type="match status" value="1"/>
</dbReference>
<dbReference type="PROSITE" id="PS00681">
    <property type="entry name" value="CHAPERONINS_CPN10"/>
    <property type="match status" value="1"/>
</dbReference>
<protein>
    <recommendedName>
        <fullName evidence="1">Co-chaperonin GroES</fullName>
    </recommendedName>
    <alternativeName>
        <fullName evidence="1">10 kDa chaperonin</fullName>
    </alternativeName>
    <alternativeName>
        <fullName evidence="1">Chaperonin-10</fullName>
        <shortName evidence="1">Cpn10</shortName>
    </alternativeName>
</protein>
<accession>Q2FF94</accession>
<sequence length="94" mass="10416">MLKPIGNRVIIEKKEQEQTTKSGIVLTDSAKEKSNEGVIVAVGTGRLLNDGTRVTPEVKEGDRVVFQQYAGTEVKRDNETYLVLNEEDILAVIE</sequence>